<evidence type="ECO:0000255" key="1"/>
<evidence type="ECO:0000269" key="2">
    <source>
    </source>
</evidence>
<evidence type="ECO:0000269" key="3">
    <source>
    </source>
</evidence>
<evidence type="ECO:0000305" key="4"/>
<dbReference type="EMBL" id="U73857">
    <property type="protein sequence ID" value="AAB18029.1"/>
    <property type="status" value="ALT_FRAME"/>
    <property type="molecule type" value="Genomic_DNA"/>
</dbReference>
<dbReference type="EMBL" id="U00096">
    <property type="protein sequence ID" value="AAC73404.2"/>
    <property type="molecule type" value="Genomic_DNA"/>
</dbReference>
<dbReference type="EMBL" id="AP009048">
    <property type="protein sequence ID" value="BAE76086.1"/>
    <property type="molecule type" value="Genomic_DNA"/>
</dbReference>
<dbReference type="PIR" id="E64756">
    <property type="entry name" value="E64756"/>
</dbReference>
<dbReference type="RefSeq" id="NP_414835.2">
    <property type="nucleotide sequence ID" value="NC_000913.3"/>
</dbReference>
<dbReference type="RefSeq" id="WP_001299021.1">
    <property type="nucleotide sequence ID" value="NZ_SSZK01000048.1"/>
</dbReference>
<dbReference type="BioGRID" id="4259798">
    <property type="interactions" value="12"/>
</dbReference>
<dbReference type="FunCoup" id="P75685">
    <property type="interactions" value="191"/>
</dbReference>
<dbReference type="STRING" id="511145.b0301"/>
<dbReference type="PaxDb" id="511145-b0301"/>
<dbReference type="EnsemblBacteria" id="AAC73404">
    <property type="protein sequence ID" value="AAC73404"/>
    <property type="gene ID" value="b0301"/>
</dbReference>
<dbReference type="GeneID" id="75206495"/>
<dbReference type="GeneID" id="944974"/>
<dbReference type="KEGG" id="ecj:JW5038"/>
<dbReference type="KEGG" id="eco:b0301"/>
<dbReference type="KEGG" id="ecoc:C3026_01480"/>
<dbReference type="KEGG" id="ecoc:C3026_24655"/>
<dbReference type="PATRIC" id="fig|511145.12.peg.309"/>
<dbReference type="EchoBASE" id="EB3349"/>
<dbReference type="eggNOG" id="COG3059">
    <property type="taxonomic scope" value="Bacteria"/>
</dbReference>
<dbReference type="HOGENOM" id="CLU_102847_0_0_6"/>
<dbReference type="InParanoid" id="P75685"/>
<dbReference type="OMA" id="WNYEAEG"/>
<dbReference type="OrthoDB" id="1118972at2"/>
<dbReference type="PhylomeDB" id="P75685"/>
<dbReference type="BioCyc" id="EcoCyc:G6171-MONOMER"/>
<dbReference type="PRO" id="PR:P75685"/>
<dbReference type="Proteomes" id="UP000000625">
    <property type="component" value="Chromosome"/>
</dbReference>
<dbReference type="GO" id="GO:0005886">
    <property type="term" value="C:plasma membrane"/>
    <property type="evidence" value="ECO:0000314"/>
    <property type="project" value="EcoCyc"/>
</dbReference>
<dbReference type="GO" id="GO:1901530">
    <property type="term" value="P:response to hypochlorite"/>
    <property type="evidence" value="ECO:0000315"/>
    <property type="project" value="EcoCyc"/>
</dbReference>
<dbReference type="InterPro" id="IPR016865">
    <property type="entry name" value="RclC"/>
</dbReference>
<dbReference type="InterPro" id="IPR007339">
    <property type="entry name" value="RclC-like"/>
</dbReference>
<dbReference type="InterPro" id="IPR053532">
    <property type="entry name" value="RCS_Resistance"/>
</dbReference>
<dbReference type="NCBIfam" id="NF040476">
    <property type="entry name" value="chlor_memb_RclC"/>
    <property type="match status" value="1"/>
</dbReference>
<dbReference type="PANTHER" id="PTHR40106">
    <property type="entry name" value="INNER MEMBRANE PROTEIN RCLC"/>
    <property type="match status" value="1"/>
</dbReference>
<dbReference type="PANTHER" id="PTHR40106:SF1">
    <property type="entry name" value="INNER MEMBRANE PROTEIN RCLC"/>
    <property type="match status" value="1"/>
</dbReference>
<dbReference type="Pfam" id="PF04224">
    <property type="entry name" value="DUF417"/>
    <property type="match status" value="1"/>
</dbReference>
<dbReference type="PIRSF" id="PIRSF028065">
    <property type="entry name" value="UCP028065"/>
    <property type="match status" value="1"/>
</dbReference>
<feature type="chain" id="PRO_0000168566" description="Inner membrane protein RclC">
    <location>
        <begin position="1"/>
        <end position="197"/>
    </location>
</feature>
<feature type="topological domain" description="Periplasmic" evidence="1">
    <location>
        <begin position="1"/>
        <end position="15"/>
    </location>
</feature>
<feature type="transmembrane region" description="Helical" evidence="1">
    <location>
        <begin position="16"/>
        <end position="36"/>
    </location>
</feature>
<feature type="topological domain" description="Cytoplasmic" evidence="1">
    <location>
        <begin position="37"/>
        <end position="85"/>
    </location>
</feature>
<feature type="transmembrane region" description="Helical" evidence="1">
    <location>
        <begin position="86"/>
        <end position="106"/>
    </location>
</feature>
<feature type="topological domain" description="Periplasmic" evidence="1">
    <location>
        <begin position="107"/>
        <end position="112"/>
    </location>
</feature>
<feature type="transmembrane region" description="Helical" evidence="1">
    <location>
        <begin position="113"/>
        <end position="133"/>
    </location>
</feature>
<feature type="topological domain" description="Cytoplasmic" evidence="1">
    <location>
        <begin position="134"/>
        <end position="197"/>
    </location>
</feature>
<name>RCLC_ECOLI</name>
<comment type="function">
    <text evidence="3">Probably involved in reactive chlorine species (RCS) stress resistance.</text>
</comment>
<comment type="subcellular location">
    <subcellularLocation>
        <location evidence="2">Cell inner membrane</location>
        <topology evidence="2">Multi-pass membrane protein</topology>
    </subcellularLocation>
</comment>
<comment type="induction">
    <text evidence="3">Induced by RclR in response to hypochlorous acid (HOCl).</text>
</comment>
<comment type="disruption phenotype">
    <text evidence="3">Mutants are more sensitive to HOCl treatment than wild-type cells.</text>
</comment>
<comment type="sequence caution" evidence="4">
    <conflict type="frameshift">
        <sequence resource="EMBL-CDS" id="AAB18029"/>
    </conflict>
</comment>
<gene>
    <name type="primary">rclC</name>
    <name type="synonym">ykgB</name>
    <name type="ordered locus">b0301</name>
    <name type="ordered locus">JW5038</name>
</gene>
<protein>
    <recommendedName>
        <fullName>Inner membrane protein RclC</fullName>
    </recommendedName>
    <alternativeName>
        <fullName>Reactive chlorine resistance protein C</fullName>
    </alternativeName>
</protein>
<proteinExistence type="evidence at protein level"/>
<organism>
    <name type="scientific">Escherichia coli (strain K12)</name>
    <dbReference type="NCBI Taxonomy" id="83333"/>
    <lineage>
        <taxon>Bacteria</taxon>
        <taxon>Pseudomonadati</taxon>
        <taxon>Pseudomonadota</taxon>
        <taxon>Gammaproteobacteria</taxon>
        <taxon>Enterobacterales</taxon>
        <taxon>Enterobacteriaceae</taxon>
        <taxon>Escherichia</taxon>
    </lineage>
</organism>
<keyword id="KW-0997">Cell inner membrane</keyword>
<keyword id="KW-1003">Cell membrane</keyword>
<keyword id="KW-0472">Membrane</keyword>
<keyword id="KW-1185">Reference proteome</keyword>
<keyword id="KW-0346">Stress response</keyword>
<keyword id="KW-0812">Transmembrane</keyword>
<keyword id="KW-1133">Transmembrane helix</keyword>
<reference key="1">
    <citation type="submission" date="1997-01" db="EMBL/GenBank/DDBJ databases">
        <title>Sequence of minutes 4-25 of Escherichia coli.</title>
        <authorList>
            <person name="Chung E."/>
            <person name="Allen E."/>
            <person name="Araujo R."/>
            <person name="Aparicio A.M."/>
            <person name="Davis K."/>
            <person name="Duncan M."/>
            <person name="Federspiel N."/>
            <person name="Hyman R."/>
            <person name="Kalman S."/>
            <person name="Komp C."/>
            <person name="Kurdi O."/>
            <person name="Lew H."/>
            <person name="Lin D."/>
            <person name="Namath A."/>
            <person name="Oefner P."/>
            <person name="Roberts D."/>
            <person name="Schramm S."/>
            <person name="Davis R.W."/>
        </authorList>
    </citation>
    <scope>NUCLEOTIDE SEQUENCE [LARGE SCALE GENOMIC DNA]</scope>
    <source>
        <strain>K12 / MG1655 / ATCC 47076</strain>
    </source>
</reference>
<reference key="2">
    <citation type="journal article" date="1997" name="Science">
        <title>The complete genome sequence of Escherichia coli K-12.</title>
        <authorList>
            <person name="Blattner F.R."/>
            <person name="Plunkett G. III"/>
            <person name="Bloch C.A."/>
            <person name="Perna N.T."/>
            <person name="Burland V."/>
            <person name="Riley M."/>
            <person name="Collado-Vides J."/>
            <person name="Glasner J.D."/>
            <person name="Rode C.K."/>
            <person name="Mayhew G.F."/>
            <person name="Gregor J."/>
            <person name="Davis N.W."/>
            <person name="Kirkpatrick H.A."/>
            <person name="Goeden M.A."/>
            <person name="Rose D.J."/>
            <person name="Mau B."/>
            <person name="Shao Y."/>
        </authorList>
    </citation>
    <scope>NUCLEOTIDE SEQUENCE [LARGE SCALE GENOMIC DNA]</scope>
    <source>
        <strain>K12 / MG1655 / ATCC 47076</strain>
    </source>
</reference>
<reference key="3">
    <citation type="journal article" date="2006" name="Mol. Syst. Biol.">
        <title>Highly accurate genome sequences of Escherichia coli K-12 strains MG1655 and W3110.</title>
        <authorList>
            <person name="Hayashi K."/>
            <person name="Morooka N."/>
            <person name="Yamamoto Y."/>
            <person name="Fujita K."/>
            <person name="Isono K."/>
            <person name="Choi S."/>
            <person name="Ohtsubo E."/>
            <person name="Baba T."/>
            <person name="Wanner B.L."/>
            <person name="Mori H."/>
            <person name="Horiuchi T."/>
        </authorList>
    </citation>
    <scope>NUCLEOTIDE SEQUENCE [LARGE SCALE GENOMIC DNA]</scope>
    <source>
        <strain>K12 / W3110 / ATCC 27325 / DSM 5911</strain>
    </source>
</reference>
<reference key="4">
    <citation type="journal article" date="2005" name="Science">
        <title>Global topology analysis of the Escherichia coli inner membrane proteome.</title>
        <authorList>
            <person name="Daley D.O."/>
            <person name="Rapp M."/>
            <person name="Granseth E."/>
            <person name="Melen K."/>
            <person name="Drew D."/>
            <person name="von Heijne G."/>
        </authorList>
    </citation>
    <scope>TOPOLOGY [LARGE SCALE ANALYSIS]</scope>
    <scope>SUBCELLULAR LOCATION</scope>
    <source>
        <strain>K12 / MG1655 / ATCC 47076</strain>
    </source>
</reference>
<reference key="5">
    <citation type="journal article" date="2013" name="J. Biol. Chem.">
        <title>The RclR protein is a reactive chlorine-specific transcription factor in Escherichia coli.</title>
        <authorList>
            <person name="Parker B.W."/>
            <person name="Schwessinger E.A."/>
            <person name="Jakob U."/>
            <person name="Gray M.J."/>
        </authorList>
    </citation>
    <scope>FUNCTION</scope>
    <scope>INDUCTION</scope>
    <scope>DISRUPTION PHENOTYPE</scope>
    <scope>GENE NAME</scope>
    <source>
        <strain>K12 / MG1655 / ATCC 47076</strain>
    </source>
</reference>
<accession>P75685</accession>
<accession>P71303</accession>
<accession>Q2MCC0</accession>
<sequence length="197" mass="21899">MEKYLHLLSRGDKIGLTLIRLSIAIVFMWIGLLKFVPYEADSITPFVANSPLMSFFYEHPEDYKQYLTHEGEYKPEARAWQTANNTYGFSNGLGVVEVIIALLVLANPVNRWLGLLGGLMAFTTPLVTLSFLITTPEAWVPALGDAHHGFPYLSGAGRLVLKDTLMLAGAVMIMADSAREILKQRSNESSSTLKTEY</sequence>